<reference key="1">
    <citation type="journal article" date="2004" name="Biosci. Biotechnol. Biochem.">
        <title>Neoculin as a new taste-modifying protein occurring in the fruit of Curculigo latifolia.</title>
        <authorList>
            <person name="Shirasuka Y."/>
            <person name="Nakajima K."/>
            <person name="Asakura T."/>
            <person name="Yamashita H."/>
            <person name="Yamamoto A."/>
            <person name="Hata S."/>
            <person name="Nagata S."/>
            <person name="Abo M."/>
            <person name="Sorimachi H."/>
            <person name="Abe K."/>
        </authorList>
    </citation>
    <scope>NUCLEOTIDE SEQUENCE [MRNA]</scope>
    <scope>PROTEIN SEQUENCE OF 23-135</scope>
    <scope>VARIANT ASN-80</scope>
</reference>
<reference key="2">
    <citation type="journal article" date="2004" name="FEBS Lett.">
        <title>Recombinant curculin heterodimer exhibits taste-modifying and sweet-tasting activities.</title>
        <authorList>
            <person name="Suzuki M."/>
            <person name="Kurimoto E."/>
            <person name="Nirasawa S."/>
            <person name="Masuda Y."/>
            <person name="Hori K."/>
            <person name="Kurihara Y."/>
            <person name="Shimba N."/>
            <person name="Kawai M."/>
            <person name="Suzuki E."/>
            <person name="Kato K."/>
        </authorList>
    </citation>
    <scope>NUCLEOTIDE SEQUENCE [MRNA]</scope>
    <scope>DISULFIDE BONDS</scope>
</reference>
<reference key="3">
    <citation type="journal article" date="2006" name="J. Mol. Biol.">
        <title>Crystal structure of neoculin: insights into its sweetness and taste-modifying activity.</title>
        <authorList>
            <person name="Shimizu-Ibuka A."/>
            <person name="Morita Y."/>
            <person name="Terada T."/>
            <person name="Asakura T."/>
            <person name="Nakajima K."/>
            <person name="Iwata S."/>
            <person name="Misaka T."/>
            <person name="Sorimachi H."/>
            <person name="Arai S."/>
            <person name="Abe K."/>
        </authorList>
    </citation>
    <scope>X-RAY CRYSTALLOGRAPHY (2.76 ANGSTROMS) OF 23-135</scope>
    <scope>SUBUNIT</scope>
    <scope>DISULFIDE BONDS</scope>
</reference>
<proteinExistence type="evidence at protein level"/>
<dbReference type="EMBL" id="AB167079">
    <property type="protein sequence ID" value="BAD29946.1"/>
    <property type="molecule type" value="mRNA"/>
</dbReference>
<dbReference type="EMBL" id="AB167080">
    <property type="protein sequence ID" value="BAE45253.1"/>
    <property type="status" value="ALT_INIT"/>
    <property type="molecule type" value="mRNA"/>
</dbReference>
<dbReference type="EMBL" id="AB181490">
    <property type="protein sequence ID" value="BAD38841.1"/>
    <property type="molecule type" value="mRNA"/>
</dbReference>
<dbReference type="PDB" id="2D04">
    <property type="method" value="X-ray"/>
    <property type="resolution" value="2.76 A"/>
    <property type="chains" value="A/C/E/G=23-135"/>
</dbReference>
<dbReference type="PDBsum" id="2D04"/>
<dbReference type="SMR" id="Q6F495"/>
<dbReference type="IntAct" id="Q6F495">
    <property type="interactions" value="1"/>
</dbReference>
<dbReference type="EvolutionaryTrace" id="Q6F495"/>
<dbReference type="GO" id="GO:0030246">
    <property type="term" value="F:carbohydrate binding"/>
    <property type="evidence" value="ECO:0007669"/>
    <property type="project" value="UniProtKB-KW"/>
</dbReference>
<dbReference type="GO" id="GO:0051707">
    <property type="term" value="P:response to other organism"/>
    <property type="evidence" value="ECO:0007669"/>
    <property type="project" value="UniProtKB-ARBA"/>
</dbReference>
<dbReference type="CDD" id="cd00028">
    <property type="entry name" value="B_lectin"/>
    <property type="match status" value="1"/>
</dbReference>
<dbReference type="Gene3D" id="2.90.10.10">
    <property type="entry name" value="Bulb-type lectin domain"/>
    <property type="match status" value="1"/>
</dbReference>
<dbReference type="InterPro" id="IPR001480">
    <property type="entry name" value="Bulb-type_lectin_dom"/>
</dbReference>
<dbReference type="InterPro" id="IPR036426">
    <property type="entry name" value="Bulb-type_lectin_dom_sf"/>
</dbReference>
<dbReference type="SMART" id="SM00108">
    <property type="entry name" value="B_lectin"/>
    <property type="match status" value="1"/>
</dbReference>
<dbReference type="SUPFAM" id="SSF51110">
    <property type="entry name" value="alpha-D-mannose-specific plant lectins"/>
    <property type="match status" value="1"/>
</dbReference>
<dbReference type="PROSITE" id="PS50927">
    <property type="entry name" value="BULB_LECTIN"/>
    <property type="match status" value="1"/>
</dbReference>
<feature type="signal peptide" evidence="3">
    <location>
        <begin position="1"/>
        <end position="22"/>
    </location>
</feature>
<feature type="chain" id="PRO_0000366212" description="Curculin-2">
    <location>
        <begin position="23"/>
        <end position="135"/>
    </location>
</feature>
<feature type="propeptide" id="PRO_0000366213">
    <location>
        <begin position="136"/>
        <end position="158"/>
    </location>
</feature>
<feature type="domain" description="Bulb-type lectin" evidence="2">
    <location>
        <begin position="23"/>
        <end position="131"/>
    </location>
</feature>
<feature type="glycosylation site" description="N-linked (GlcNAc...) asparagine" evidence="1">
    <location>
        <position position="103"/>
    </location>
</feature>
<feature type="disulfide bond">
    <location>
        <begin position="51"/>
        <end position="74"/>
    </location>
</feature>
<feature type="disulfide bond" description="Interchain (with C-131 in NBS)">
    <location>
        <position position="99"/>
    </location>
</feature>
<feature type="disulfide bond" description="Interchain (with C-99 in NBS)">
    <location>
        <position position="131"/>
    </location>
</feature>
<feature type="sequence variant" evidence="3">
    <original>S</original>
    <variation>N</variation>
    <location>
        <position position="80"/>
    </location>
</feature>
<feature type="strand" evidence="7">
    <location>
        <begin position="25"/>
        <end position="27"/>
    </location>
</feature>
<feature type="strand" evidence="7">
    <location>
        <begin position="36"/>
        <end position="40"/>
    </location>
</feature>
<feature type="strand" evidence="7">
    <location>
        <begin position="43"/>
        <end position="47"/>
    </location>
</feature>
<feature type="strand" evidence="7">
    <location>
        <begin position="53"/>
        <end position="57"/>
    </location>
</feature>
<feature type="strand" evidence="7">
    <location>
        <begin position="60"/>
        <end position="64"/>
    </location>
</feature>
<feature type="strand" evidence="7">
    <location>
        <begin position="75"/>
        <end position="78"/>
    </location>
</feature>
<feature type="strand" evidence="7">
    <location>
        <begin position="84"/>
        <end position="87"/>
    </location>
</feature>
<feature type="strand" evidence="7">
    <location>
        <begin position="93"/>
        <end position="95"/>
    </location>
</feature>
<feature type="strand" evidence="7">
    <location>
        <begin position="102"/>
        <end position="104"/>
    </location>
</feature>
<feature type="strand" evidence="7">
    <location>
        <begin position="107"/>
        <end position="110"/>
    </location>
</feature>
<feature type="strand" evidence="7">
    <location>
        <begin position="116"/>
        <end position="119"/>
    </location>
</feature>
<feature type="strand" evidence="7">
    <location>
        <begin position="124"/>
        <end position="130"/>
    </location>
</feature>
<organism>
    <name type="scientific">Molineria latifolia</name>
    <name type="common">Lumbah</name>
    <name type="synonym">Curculigo latifolia</name>
    <dbReference type="NCBI Taxonomy" id="4676"/>
    <lineage>
        <taxon>Eukaryota</taxon>
        <taxon>Viridiplantae</taxon>
        <taxon>Streptophyta</taxon>
        <taxon>Embryophyta</taxon>
        <taxon>Tracheophyta</taxon>
        <taxon>Spermatophyta</taxon>
        <taxon>Magnoliopsida</taxon>
        <taxon>Liliopsida</taxon>
        <taxon>Asparagales</taxon>
        <taxon>Hypoxidaceae</taxon>
        <taxon>Molineria</taxon>
    </lineage>
</organism>
<evidence type="ECO:0000255" key="1"/>
<evidence type="ECO:0000255" key="2">
    <source>
        <dbReference type="PROSITE-ProRule" id="PRU00038"/>
    </source>
</evidence>
<evidence type="ECO:0000269" key="3">
    <source>
    </source>
</evidence>
<evidence type="ECO:0000269" key="4">
    <source>
    </source>
</evidence>
<evidence type="ECO:0000269" key="5">
    <source>
    </source>
</evidence>
<evidence type="ECO:0000305" key="6"/>
<evidence type="ECO:0007829" key="7">
    <source>
        <dbReference type="PDB" id="2D04"/>
    </source>
</evidence>
<accession>Q6F495</accession>
<accession>Q3MV17</accession>
<keyword id="KW-0002">3D-structure</keyword>
<keyword id="KW-0903">Direct protein sequencing</keyword>
<keyword id="KW-1015">Disulfide bond</keyword>
<keyword id="KW-0325">Glycoprotein</keyword>
<keyword id="KW-0430">Lectin</keyword>
<keyword id="KW-0732">Signal</keyword>
<keyword id="KW-0776">Taste-modifying protein</keyword>
<protein>
    <recommendedName>
        <fullName>Curculin-2</fullName>
    </recommendedName>
    <alternativeName>
        <fullName>Neoculin acidic subunit</fullName>
        <shortName>NAS</shortName>
    </alternativeName>
</protein>
<comment type="function">
    <text>Taste-modifying protein; sweet-tasting. After curculin, water elicits a sweet taste, and sour substances induce a stronger sense of sweetness.</text>
</comment>
<comment type="subunit">
    <text evidence="4 5">Heterodimer with curculin-1; Disulfide-linked.</text>
</comment>
<comment type="sequence caution" evidence="6">
    <conflict type="erroneous initiation">
        <sequence resource="EMBL-CDS" id="BAE45253"/>
    </conflict>
</comment>
<name>CURC2_MOLLA</name>
<sequence>MAAKFLLTILVTFAAVASLGMADSVLLSGQTLYAGHSLTSGSYTLTIQNNCNLVKYQHGRQIWASDTDGQGSQCRLTLRSDGNLIIYDDNNMVVWGSDCWGNNGTYALVLQQDGLFVIYGPVLWPLGLNGCRSLNGEITVAKDSTEPQHEDIKMVINN</sequence>